<feature type="transit peptide" description="Mitochondrion" evidence="1">
    <location>
        <begin position="1"/>
        <end position="72"/>
    </location>
</feature>
<feature type="chain" id="PRO_0000413270" description="Glutamyl-tRNA(Gln) amidotransferase subunit B, mitochondrial">
    <location>
        <begin position="73"/>
        <end position="595"/>
    </location>
</feature>
<protein>
    <recommendedName>
        <fullName evidence="1">Glutamyl-tRNA(Gln) amidotransferase subunit B, mitochondrial</fullName>
        <shortName evidence="1">Glu-AdT subunit B</shortName>
        <ecNumber evidence="1">6.3.5.-</ecNumber>
    </recommendedName>
</protein>
<organism>
    <name type="scientific">Talaromyces marneffei (strain ATCC 18224 / CBS 334.59 / QM 7333)</name>
    <name type="common">Penicillium marneffei</name>
    <dbReference type="NCBI Taxonomy" id="441960"/>
    <lineage>
        <taxon>Eukaryota</taxon>
        <taxon>Fungi</taxon>
        <taxon>Dikarya</taxon>
        <taxon>Ascomycota</taxon>
        <taxon>Pezizomycotina</taxon>
        <taxon>Eurotiomycetes</taxon>
        <taxon>Eurotiomycetidae</taxon>
        <taxon>Eurotiales</taxon>
        <taxon>Trichocomaceae</taxon>
        <taxon>Talaromyces</taxon>
        <taxon>Talaromyces sect. Talaromyces</taxon>
    </lineage>
</organism>
<comment type="function">
    <text evidence="1">Allows the formation of correctly charged Gln-tRNA(Gln) through the transamidation of misacylated Glu-tRNA(Gln) in the mitochondria. The reaction takes place in the presence of glutamine and ATP through an activated gamma-phospho-Glu-tRNA(Gln).</text>
</comment>
<comment type="catalytic activity">
    <reaction evidence="1">
        <text>L-glutamyl-tRNA(Gln) + L-glutamine + ATP + H2O = L-glutaminyl-tRNA(Gln) + L-glutamate + ADP + phosphate + H(+)</text>
        <dbReference type="Rhea" id="RHEA:17521"/>
        <dbReference type="Rhea" id="RHEA-COMP:9681"/>
        <dbReference type="Rhea" id="RHEA-COMP:9684"/>
        <dbReference type="ChEBI" id="CHEBI:15377"/>
        <dbReference type="ChEBI" id="CHEBI:15378"/>
        <dbReference type="ChEBI" id="CHEBI:29985"/>
        <dbReference type="ChEBI" id="CHEBI:30616"/>
        <dbReference type="ChEBI" id="CHEBI:43474"/>
        <dbReference type="ChEBI" id="CHEBI:58359"/>
        <dbReference type="ChEBI" id="CHEBI:78520"/>
        <dbReference type="ChEBI" id="CHEBI:78521"/>
        <dbReference type="ChEBI" id="CHEBI:456216"/>
    </reaction>
</comment>
<comment type="subunit">
    <text evidence="1">Subunit of the heterotrimeric GatCAB amidotransferase (AdT) complex, composed of A, B and C subunits.</text>
</comment>
<comment type="subcellular location">
    <subcellularLocation>
        <location evidence="1">Mitochondrion</location>
    </subcellularLocation>
</comment>
<comment type="similarity">
    <text evidence="1">Belongs to the GatB/GatE family. GatB subfamily.</text>
</comment>
<gene>
    <name type="ORF">PMAA_019330</name>
</gene>
<dbReference type="EC" id="6.3.5.-" evidence="1"/>
<dbReference type="EMBL" id="DS995899">
    <property type="protein sequence ID" value="EEA27032.1"/>
    <property type="molecule type" value="Genomic_DNA"/>
</dbReference>
<dbReference type="RefSeq" id="XP_002143547.1">
    <property type="nucleotide sequence ID" value="XM_002143511.1"/>
</dbReference>
<dbReference type="SMR" id="B6Q348"/>
<dbReference type="STRING" id="441960.B6Q348"/>
<dbReference type="VEuPathDB" id="FungiDB:PMAA_019330"/>
<dbReference type="HOGENOM" id="CLU_019240_4_1_1"/>
<dbReference type="OrthoDB" id="3965at28568"/>
<dbReference type="PhylomeDB" id="B6Q348"/>
<dbReference type="Proteomes" id="UP000001294">
    <property type="component" value="Unassembled WGS sequence"/>
</dbReference>
<dbReference type="GO" id="GO:0030956">
    <property type="term" value="C:glutamyl-tRNA(Gln) amidotransferase complex"/>
    <property type="evidence" value="ECO:0007669"/>
    <property type="project" value="UniProtKB-UniRule"/>
</dbReference>
<dbReference type="GO" id="GO:0005739">
    <property type="term" value="C:mitochondrion"/>
    <property type="evidence" value="ECO:0007669"/>
    <property type="project" value="UniProtKB-SubCell"/>
</dbReference>
<dbReference type="GO" id="GO:0005524">
    <property type="term" value="F:ATP binding"/>
    <property type="evidence" value="ECO:0007669"/>
    <property type="project" value="UniProtKB-KW"/>
</dbReference>
<dbReference type="GO" id="GO:0050567">
    <property type="term" value="F:glutaminyl-tRNA synthase (glutamine-hydrolyzing) activity"/>
    <property type="evidence" value="ECO:0007669"/>
    <property type="project" value="UniProtKB-UniRule"/>
</dbReference>
<dbReference type="GO" id="GO:0070681">
    <property type="term" value="P:glutaminyl-tRNAGln biosynthesis via transamidation"/>
    <property type="evidence" value="ECO:0007669"/>
    <property type="project" value="UniProtKB-UniRule"/>
</dbReference>
<dbReference type="GO" id="GO:0032543">
    <property type="term" value="P:mitochondrial translation"/>
    <property type="evidence" value="ECO:0007669"/>
    <property type="project" value="UniProtKB-UniRule"/>
</dbReference>
<dbReference type="Gene3D" id="1.10.10.410">
    <property type="match status" value="1"/>
</dbReference>
<dbReference type="HAMAP" id="MF_00121">
    <property type="entry name" value="GatB"/>
    <property type="match status" value="1"/>
</dbReference>
<dbReference type="InterPro" id="IPR017959">
    <property type="entry name" value="Asn/Gln-tRNA_amidoTrfase_suB/E"/>
</dbReference>
<dbReference type="InterPro" id="IPR006075">
    <property type="entry name" value="Asn/Gln-tRNA_Trfase_suB/E_cat"/>
</dbReference>
<dbReference type="InterPro" id="IPR018027">
    <property type="entry name" value="Asn/Gln_amidotransferase"/>
</dbReference>
<dbReference type="InterPro" id="IPR003789">
    <property type="entry name" value="Asn/Gln_tRNA_amidoTrase-B-like"/>
</dbReference>
<dbReference type="InterPro" id="IPR004413">
    <property type="entry name" value="GatB"/>
</dbReference>
<dbReference type="InterPro" id="IPR023168">
    <property type="entry name" value="GatB_Yqey_C_2"/>
</dbReference>
<dbReference type="InterPro" id="IPR017958">
    <property type="entry name" value="Gln-tRNA_amidoTrfase_suB_CS"/>
</dbReference>
<dbReference type="InterPro" id="IPR014746">
    <property type="entry name" value="Gln_synth/guanido_kin_cat_dom"/>
</dbReference>
<dbReference type="NCBIfam" id="TIGR00133">
    <property type="entry name" value="gatB"/>
    <property type="match status" value="1"/>
</dbReference>
<dbReference type="NCBIfam" id="NF004012">
    <property type="entry name" value="PRK05477.1-2"/>
    <property type="match status" value="1"/>
</dbReference>
<dbReference type="PANTHER" id="PTHR11659">
    <property type="entry name" value="GLUTAMYL-TRNA GLN AMIDOTRANSFERASE SUBUNIT B MITOCHONDRIAL AND PROKARYOTIC PET112-RELATED"/>
    <property type="match status" value="1"/>
</dbReference>
<dbReference type="PANTHER" id="PTHR11659:SF0">
    <property type="entry name" value="GLUTAMYL-TRNA(GLN) AMIDOTRANSFERASE SUBUNIT B, MITOCHONDRIAL"/>
    <property type="match status" value="1"/>
</dbReference>
<dbReference type="Pfam" id="PF02934">
    <property type="entry name" value="GatB_N"/>
    <property type="match status" value="1"/>
</dbReference>
<dbReference type="Pfam" id="PF02637">
    <property type="entry name" value="GatB_Yqey"/>
    <property type="match status" value="1"/>
</dbReference>
<dbReference type="SMART" id="SM00845">
    <property type="entry name" value="GatB_Yqey"/>
    <property type="match status" value="1"/>
</dbReference>
<dbReference type="SUPFAM" id="SSF89095">
    <property type="entry name" value="GatB/YqeY motif"/>
    <property type="match status" value="1"/>
</dbReference>
<dbReference type="SUPFAM" id="SSF55931">
    <property type="entry name" value="Glutamine synthetase/guanido kinase"/>
    <property type="match status" value="1"/>
</dbReference>
<dbReference type="PROSITE" id="PS01234">
    <property type="entry name" value="GATB"/>
    <property type="match status" value="1"/>
</dbReference>
<sequence>MPRLWYSRYLAAARLRCRPLLIPEQPAVRLYQPLRRTVNTDANVHRPNEFVPLRKQLKEEAKRAKSQSRNGRGKKQVAANDGWELTVGIEIHAQLNSEAKLFSKAPTSTVAEPNTNVALFDLAFPGSQPEFQAATLLPALRAAIALNCDIQHTSRFDRKHYFYQDQPAGYQITQYYEPFARNGFIELHDYDGIAPEDGKSVRVDIKQIQLEQDTAKSHEHPPSAHFLDFNRVSHPLIEIITMPQIHSPATAAACVKKIQAILQATSAVTTGMELGGLRADVNVSVRRRDAPPGAGEYYGVQGLGQRTEIKNLSSFKAVEDAIIAERDRQIRVLESGGTVEVETRGWSIGSTETRKLRSKEGEVDYRYMPDPDLKPLVIDDGLVSALKDTLPALPDQLLSMLIGSSYGLSLEDAKPLVELDDGARLEYYQDVVDALLALRHGEDGDTANKLLGRAAANWVLHELGALHTKSDVTWHADRISAQTLAELIDQLLRKKITSSVAKQVLAMIFEGDQRPIHQLLEEENLLLRPLSRDEYIALANSLIEENPQMVAQIREKNQLGKIGWFVGQMMRLGEKGRVEAQRAEEIVRKLILGGQ</sequence>
<accession>B6Q348</accession>
<keyword id="KW-0067">ATP-binding</keyword>
<keyword id="KW-0436">Ligase</keyword>
<keyword id="KW-0496">Mitochondrion</keyword>
<keyword id="KW-0547">Nucleotide-binding</keyword>
<keyword id="KW-0648">Protein biosynthesis</keyword>
<keyword id="KW-1185">Reference proteome</keyword>
<keyword id="KW-0809">Transit peptide</keyword>
<evidence type="ECO:0000255" key="1">
    <source>
        <dbReference type="HAMAP-Rule" id="MF_03147"/>
    </source>
</evidence>
<reference key="1">
    <citation type="journal article" date="2015" name="Genome Announc.">
        <title>Genome sequence of the AIDS-associated pathogen Penicillium marneffei (ATCC18224) and its near taxonomic relative Talaromyces stipitatus (ATCC10500).</title>
        <authorList>
            <person name="Nierman W.C."/>
            <person name="Fedorova-Abrams N.D."/>
            <person name="Andrianopoulos A."/>
        </authorList>
    </citation>
    <scope>NUCLEOTIDE SEQUENCE [LARGE SCALE GENOMIC DNA]</scope>
    <source>
        <strain>ATCC 18224 / CBS 334.59 / QM 7333</strain>
    </source>
</reference>
<proteinExistence type="inferred from homology"/>
<name>GATB_TALMQ</name>